<name>Y4660_METAC</name>
<feature type="chain" id="PRO_0000094524" description="UPF0200 protein MA_4660">
    <location>
        <begin position="1"/>
        <end position="187"/>
    </location>
</feature>
<feature type="binding site" evidence="1">
    <location>
        <begin position="9"/>
        <end position="16"/>
    </location>
    <ligand>
        <name>ATP</name>
        <dbReference type="ChEBI" id="CHEBI:30616"/>
    </ligand>
</feature>
<comment type="similarity">
    <text evidence="1">Belongs to the UPF0200 family.</text>
</comment>
<reference key="1">
    <citation type="journal article" date="2002" name="Genome Res.">
        <title>The genome of Methanosarcina acetivorans reveals extensive metabolic and physiological diversity.</title>
        <authorList>
            <person name="Galagan J.E."/>
            <person name="Nusbaum C."/>
            <person name="Roy A."/>
            <person name="Endrizzi M.G."/>
            <person name="Macdonald P."/>
            <person name="FitzHugh W."/>
            <person name="Calvo S."/>
            <person name="Engels R."/>
            <person name="Smirnov S."/>
            <person name="Atnoor D."/>
            <person name="Brown A."/>
            <person name="Allen N."/>
            <person name="Naylor J."/>
            <person name="Stange-Thomann N."/>
            <person name="DeArellano K."/>
            <person name="Johnson R."/>
            <person name="Linton L."/>
            <person name="McEwan P."/>
            <person name="McKernan K."/>
            <person name="Talamas J."/>
            <person name="Tirrell A."/>
            <person name="Ye W."/>
            <person name="Zimmer A."/>
            <person name="Barber R.D."/>
            <person name="Cann I."/>
            <person name="Graham D.E."/>
            <person name="Grahame D.A."/>
            <person name="Guss A.M."/>
            <person name="Hedderich R."/>
            <person name="Ingram-Smith C."/>
            <person name="Kuettner H.C."/>
            <person name="Krzycki J.A."/>
            <person name="Leigh J.A."/>
            <person name="Li W."/>
            <person name="Liu J."/>
            <person name="Mukhopadhyay B."/>
            <person name="Reeve J.N."/>
            <person name="Smith K."/>
            <person name="Springer T.A."/>
            <person name="Umayam L.A."/>
            <person name="White O."/>
            <person name="White R.H."/>
            <person name="de Macario E.C."/>
            <person name="Ferry J.G."/>
            <person name="Jarrell K.F."/>
            <person name="Jing H."/>
            <person name="Macario A.J.L."/>
            <person name="Paulsen I.T."/>
            <person name="Pritchett M."/>
            <person name="Sowers K.R."/>
            <person name="Swanson R.V."/>
            <person name="Zinder S.H."/>
            <person name="Lander E."/>
            <person name="Metcalf W.W."/>
            <person name="Birren B."/>
        </authorList>
    </citation>
    <scope>NUCLEOTIDE SEQUENCE [LARGE SCALE GENOMIC DNA]</scope>
    <source>
        <strain>ATCC 35395 / DSM 2834 / JCM 12185 / C2A</strain>
    </source>
</reference>
<evidence type="ECO:0000255" key="1">
    <source>
        <dbReference type="HAMAP-Rule" id="MF_01111"/>
    </source>
</evidence>
<keyword id="KW-0067">ATP-binding</keyword>
<keyword id="KW-0547">Nucleotide-binding</keyword>
<keyword id="KW-1185">Reference proteome</keyword>
<protein>
    <recommendedName>
        <fullName evidence="1">UPF0200 protein MA_4660</fullName>
    </recommendedName>
</protein>
<dbReference type="EMBL" id="AE010299">
    <property type="protein sequence ID" value="AAM07994.1"/>
    <property type="molecule type" value="Genomic_DNA"/>
</dbReference>
<dbReference type="SMR" id="P58831"/>
<dbReference type="STRING" id="188937.MA_4660"/>
<dbReference type="EnsemblBacteria" id="AAM07994">
    <property type="protein sequence ID" value="AAM07994"/>
    <property type="gene ID" value="MA_4660"/>
</dbReference>
<dbReference type="KEGG" id="mac:MA_4660"/>
<dbReference type="HOGENOM" id="CLU_096329_0_0_2"/>
<dbReference type="InParanoid" id="P58831"/>
<dbReference type="PhylomeDB" id="P58831"/>
<dbReference type="Proteomes" id="UP000002487">
    <property type="component" value="Chromosome"/>
</dbReference>
<dbReference type="GO" id="GO:0005524">
    <property type="term" value="F:ATP binding"/>
    <property type="evidence" value="ECO:0007669"/>
    <property type="project" value="UniProtKB-UniRule"/>
</dbReference>
<dbReference type="Gene3D" id="3.40.50.300">
    <property type="entry name" value="P-loop containing nucleotide triphosphate hydrolases"/>
    <property type="match status" value="1"/>
</dbReference>
<dbReference type="HAMAP" id="MF_01111">
    <property type="entry name" value="UPF0200"/>
    <property type="match status" value="1"/>
</dbReference>
<dbReference type="InterPro" id="IPR022970">
    <property type="entry name" value="NTP_hydrolase-rel"/>
</dbReference>
<dbReference type="InterPro" id="IPR027417">
    <property type="entry name" value="P-loop_NTPase"/>
</dbReference>
<dbReference type="PANTHER" id="PTHR41930:SF1">
    <property type="entry name" value="DEPHOSPHO-COA KINASE"/>
    <property type="match status" value="1"/>
</dbReference>
<dbReference type="PANTHER" id="PTHR41930">
    <property type="entry name" value="UPF0200 PROTEIN MJ1399"/>
    <property type="match status" value="1"/>
</dbReference>
<dbReference type="Pfam" id="PF13207">
    <property type="entry name" value="AAA_17"/>
    <property type="match status" value="1"/>
</dbReference>
<dbReference type="SUPFAM" id="SSF52540">
    <property type="entry name" value="P-loop containing nucleoside triphosphate hydrolases"/>
    <property type="match status" value="1"/>
</dbReference>
<gene>
    <name type="ordered locus">MA_4660</name>
</gene>
<sequence length="187" mass="20898">MMKIIAFVGMPASGKSEASRIAAEMDIPVIIMGDVIRKEVLKRGLEPNDSNTGMVATDLRKCEGMDAVARRCVSQIRETGSELVVVDGVRGIAEVECFRQEFGKGFILISIYAPLEVRFSRVQKRGRSDDMNSIDGLRQRDERELSWGMGEAIEASNVEIENSFTLETFRKDVNDVLNNYLKSNSEK</sequence>
<proteinExistence type="inferred from homology"/>
<organism>
    <name type="scientific">Methanosarcina acetivorans (strain ATCC 35395 / DSM 2834 / JCM 12185 / C2A)</name>
    <dbReference type="NCBI Taxonomy" id="188937"/>
    <lineage>
        <taxon>Archaea</taxon>
        <taxon>Methanobacteriati</taxon>
        <taxon>Methanobacteriota</taxon>
        <taxon>Stenosarchaea group</taxon>
        <taxon>Methanomicrobia</taxon>
        <taxon>Methanosarcinales</taxon>
        <taxon>Methanosarcinaceae</taxon>
        <taxon>Methanosarcina</taxon>
    </lineage>
</organism>
<accession>P58831</accession>